<proteinExistence type="inferred from homology"/>
<feature type="chain" id="PRO_0000267781" description="Nucleoside diphosphate kinase">
    <location>
        <begin position="1"/>
        <end position="140"/>
    </location>
</feature>
<feature type="active site" description="Pros-phosphohistidine intermediate" evidence="1">
    <location>
        <position position="117"/>
    </location>
</feature>
<feature type="binding site" evidence="1">
    <location>
        <position position="11"/>
    </location>
    <ligand>
        <name>ATP</name>
        <dbReference type="ChEBI" id="CHEBI:30616"/>
    </ligand>
</feature>
<feature type="binding site" evidence="1">
    <location>
        <position position="59"/>
    </location>
    <ligand>
        <name>ATP</name>
        <dbReference type="ChEBI" id="CHEBI:30616"/>
    </ligand>
</feature>
<feature type="binding site" evidence="1">
    <location>
        <position position="87"/>
    </location>
    <ligand>
        <name>ATP</name>
        <dbReference type="ChEBI" id="CHEBI:30616"/>
    </ligand>
</feature>
<feature type="binding site" evidence="1">
    <location>
        <position position="93"/>
    </location>
    <ligand>
        <name>ATP</name>
        <dbReference type="ChEBI" id="CHEBI:30616"/>
    </ligand>
</feature>
<feature type="binding site" evidence="1">
    <location>
        <position position="104"/>
    </location>
    <ligand>
        <name>ATP</name>
        <dbReference type="ChEBI" id="CHEBI:30616"/>
    </ligand>
</feature>
<feature type="binding site" evidence="1">
    <location>
        <position position="114"/>
    </location>
    <ligand>
        <name>ATP</name>
        <dbReference type="ChEBI" id="CHEBI:30616"/>
    </ligand>
</feature>
<accession>Q0BQG5</accession>
<comment type="function">
    <text evidence="1">Major role in the synthesis of nucleoside triphosphates other than ATP. The ATP gamma phosphate is transferred to the NDP beta phosphate via a ping-pong mechanism, using a phosphorylated active-site intermediate.</text>
</comment>
<comment type="catalytic activity">
    <reaction evidence="1">
        <text>a 2'-deoxyribonucleoside 5'-diphosphate + ATP = a 2'-deoxyribonucleoside 5'-triphosphate + ADP</text>
        <dbReference type="Rhea" id="RHEA:44640"/>
        <dbReference type="ChEBI" id="CHEBI:30616"/>
        <dbReference type="ChEBI" id="CHEBI:61560"/>
        <dbReference type="ChEBI" id="CHEBI:73316"/>
        <dbReference type="ChEBI" id="CHEBI:456216"/>
        <dbReference type="EC" id="2.7.4.6"/>
    </reaction>
</comment>
<comment type="catalytic activity">
    <reaction evidence="1">
        <text>a ribonucleoside 5'-diphosphate + ATP = a ribonucleoside 5'-triphosphate + ADP</text>
        <dbReference type="Rhea" id="RHEA:18113"/>
        <dbReference type="ChEBI" id="CHEBI:30616"/>
        <dbReference type="ChEBI" id="CHEBI:57930"/>
        <dbReference type="ChEBI" id="CHEBI:61557"/>
        <dbReference type="ChEBI" id="CHEBI:456216"/>
        <dbReference type="EC" id="2.7.4.6"/>
    </reaction>
</comment>
<comment type="cofactor">
    <cofactor evidence="1">
        <name>Mg(2+)</name>
        <dbReference type="ChEBI" id="CHEBI:18420"/>
    </cofactor>
</comment>
<comment type="subunit">
    <text evidence="1">Homotetramer.</text>
</comment>
<comment type="subcellular location">
    <subcellularLocation>
        <location evidence="1">Cytoplasm</location>
    </subcellularLocation>
</comment>
<comment type="similarity">
    <text evidence="1">Belongs to the NDK family.</text>
</comment>
<comment type="sequence caution" evidence="2">
    <conflict type="erroneous initiation">
        <sequence resource="EMBL-CDS" id="ABI62937"/>
    </conflict>
</comment>
<sequence>MAIERTFSIIKPDATRRNLTGRINAVFEENGLRIVAQKRVQLSQAQAEAFYGVHRERPFFNDLVSFMISGPVVVQVLEGENAVARNRELMGATDPKKADAGTIRAQFAESIEANSVHGSDSAENAAIEIAYFFAGSEIVA</sequence>
<name>NDK_GRABC</name>
<protein>
    <recommendedName>
        <fullName evidence="1">Nucleoside diphosphate kinase</fullName>
        <shortName evidence="1">NDK</shortName>
        <shortName evidence="1">NDP kinase</shortName>
        <ecNumber evidence="1">2.7.4.6</ecNumber>
    </recommendedName>
    <alternativeName>
        <fullName evidence="1">Nucleoside-2-P kinase</fullName>
    </alternativeName>
</protein>
<gene>
    <name evidence="1" type="primary">ndk</name>
    <name type="ordered locus">GbCGDNIH1_2039</name>
</gene>
<evidence type="ECO:0000255" key="1">
    <source>
        <dbReference type="HAMAP-Rule" id="MF_00451"/>
    </source>
</evidence>
<evidence type="ECO:0000305" key="2"/>
<organism>
    <name type="scientific">Granulibacter bethesdensis (strain ATCC BAA-1260 / CGDNIH1)</name>
    <dbReference type="NCBI Taxonomy" id="391165"/>
    <lineage>
        <taxon>Bacteria</taxon>
        <taxon>Pseudomonadati</taxon>
        <taxon>Pseudomonadota</taxon>
        <taxon>Alphaproteobacteria</taxon>
        <taxon>Acetobacterales</taxon>
        <taxon>Acetobacteraceae</taxon>
        <taxon>Granulibacter</taxon>
    </lineage>
</organism>
<keyword id="KW-0067">ATP-binding</keyword>
<keyword id="KW-0963">Cytoplasm</keyword>
<keyword id="KW-0418">Kinase</keyword>
<keyword id="KW-0460">Magnesium</keyword>
<keyword id="KW-0479">Metal-binding</keyword>
<keyword id="KW-0546">Nucleotide metabolism</keyword>
<keyword id="KW-0547">Nucleotide-binding</keyword>
<keyword id="KW-0597">Phosphoprotein</keyword>
<keyword id="KW-1185">Reference proteome</keyword>
<keyword id="KW-0808">Transferase</keyword>
<dbReference type="EC" id="2.7.4.6" evidence="1"/>
<dbReference type="EMBL" id="CP000394">
    <property type="protein sequence ID" value="ABI62937.1"/>
    <property type="status" value="ALT_INIT"/>
    <property type="molecule type" value="Genomic_DNA"/>
</dbReference>
<dbReference type="RefSeq" id="WP_025287362.1">
    <property type="nucleotide sequence ID" value="NC_008343.2"/>
</dbReference>
<dbReference type="SMR" id="Q0BQG5"/>
<dbReference type="STRING" id="391165.GbCGDNIH1_2039"/>
<dbReference type="GeneID" id="69746226"/>
<dbReference type="KEGG" id="gbe:GbCGDNIH1_2039"/>
<dbReference type="eggNOG" id="COG0105">
    <property type="taxonomic scope" value="Bacteria"/>
</dbReference>
<dbReference type="HOGENOM" id="CLU_060216_8_1_5"/>
<dbReference type="OrthoDB" id="9801161at2"/>
<dbReference type="Proteomes" id="UP000001963">
    <property type="component" value="Chromosome"/>
</dbReference>
<dbReference type="GO" id="GO:0005737">
    <property type="term" value="C:cytoplasm"/>
    <property type="evidence" value="ECO:0007669"/>
    <property type="project" value="UniProtKB-SubCell"/>
</dbReference>
<dbReference type="GO" id="GO:0005524">
    <property type="term" value="F:ATP binding"/>
    <property type="evidence" value="ECO:0007669"/>
    <property type="project" value="UniProtKB-UniRule"/>
</dbReference>
<dbReference type="GO" id="GO:0046872">
    <property type="term" value="F:metal ion binding"/>
    <property type="evidence" value="ECO:0007669"/>
    <property type="project" value="UniProtKB-KW"/>
</dbReference>
<dbReference type="GO" id="GO:0004550">
    <property type="term" value="F:nucleoside diphosphate kinase activity"/>
    <property type="evidence" value="ECO:0007669"/>
    <property type="project" value="UniProtKB-UniRule"/>
</dbReference>
<dbReference type="GO" id="GO:0006241">
    <property type="term" value="P:CTP biosynthetic process"/>
    <property type="evidence" value="ECO:0007669"/>
    <property type="project" value="UniProtKB-UniRule"/>
</dbReference>
<dbReference type="GO" id="GO:0006183">
    <property type="term" value="P:GTP biosynthetic process"/>
    <property type="evidence" value="ECO:0007669"/>
    <property type="project" value="UniProtKB-UniRule"/>
</dbReference>
<dbReference type="GO" id="GO:0006228">
    <property type="term" value="P:UTP biosynthetic process"/>
    <property type="evidence" value="ECO:0007669"/>
    <property type="project" value="UniProtKB-UniRule"/>
</dbReference>
<dbReference type="CDD" id="cd04413">
    <property type="entry name" value="NDPk_I"/>
    <property type="match status" value="1"/>
</dbReference>
<dbReference type="FunFam" id="3.30.70.141:FF:000001">
    <property type="entry name" value="Nucleoside diphosphate kinase"/>
    <property type="match status" value="1"/>
</dbReference>
<dbReference type="Gene3D" id="3.30.70.141">
    <property type="entry name" value="Nucleoside diphosphate kinase-like domain"/>
    <property type="match status" value="1"/>
</dbReference>
<dbReference type="HAMAP" id="MF_00451">
    <property type="entry name" value="NDP_kinase"/>
    <property type="match status" value="1"/>
</dbReference>
<dbReference type="InterPro" id="IPR034907">
    <property type="entry name" value="NDK-like_dom"/>
</dbReference>
<dbReference type="InterPro" id="IPR036850">
    <property type="entry name" value="NDK-like_dom_sf"/>
</dbReference>
<dbReference type="InterPro" id="IPR001564">
    <property type="entry name" value="Nucleoside_diP_kinase"/>
</dbReference>
<dbReference type="NCBIfam" id="NF001908">
    <property type="entry name" value="PRK00668.1"/>
    <property type="match status" value="1"/>
</dbReference>
<dbReference type="PANTHER" id="PTHR46161">
    <property type="entry name" value="NUCLEOSIDE DIPHOSPHATE KINASE"/>
    <property type="match status" value="1"/>
</dbReference>
<dbReference type="PANTHER" id="PTHR46161:SF3">
    <property type="entry name" value="NUCLEOSIDE DIPHOSPHATE KINASE DDB_G0292928-RELATED"/>
    <property type="match status" value="1"/>
</dbReference>
<dbReference type="Pfam" id="PF00334">
    <property type="entry name" value="NDK"/>
    <property type="match status" value="1"/>
</dbReference>
<dbReference type="PRINTS" id="PR01243">
    <property type="entry name" value="NUCDPKINASE"/>
</dbReference>
<dbReference type="SMART" id="SM00562">
    <property type="entry name" value="NDK"/>
    <property type="match status" value="1"/>
</dbReference>
<dbReference type="SUPFAM" id="SSF54919">
    <property type="entry name" value="Nucleoside diphosphate kinase, NDK"/>
    <property type="match status" value="1"/>
</dbReference>
<dbReference type="PROSITE" id="PS51374">
    <property type="entry name" value="NDPK_LIKE"/>
    <property type="match status" value="1"/>
</dbReference>
<reference key="1">
    <citation type="journal article" date="2007" name="J. Bacteriol.">
        <title>Genome sequence analysis of the emerging human pathogenic acetic acid bacterium Granulibacter bethesdensis.</title>
        <authorList>
            <person name="Greenberg D.E."/>
            <person name="Porcella S.F."/>
            <person name="Zelazny A.M."/>
            <person name="Virtaneva K."/>
            <person name="Sturdevant D.E."/>
            <person name="Kupko J.J. III"/>
            <person name="Barbian K.D."/>
            <person name="Babar A."/>
            <person name="Dorward D.W."/>
            <person name="Holland S.M."/>
        </authorList>
    </citation>
    <scope>NUCLEOTIDE SEQUENCE [LARGE SCALE GENOMIC DNA]</scope>
    <source>
        <strain>ATCC BAA-1260 / CGDNIH1</strain>
    </source>
</reference>